<proteinExistence type="inferred from homology"/>
<gene>
    <name evidence="1" type="primary">NIP1</name>
    <name type="ORF">LELG_04240</name>
</gene>
<organism>
    <name type="scientific">Lodderomyces elongisporus (strain ATCC 11503 / CBS 2605 / JCM 1781 / NBRC 1676 / NRRL YB-4239)</name>
    <name type="common">Yeast</name>
    <name type="synonym">Saccharomyces elongisporus</name>
    <dbReference type="NCBI Taxonomy" id="379508"/>
    <lineage>
        <taxon>Eukaryota</taxon>
        <taxon>Fungi</taxon>
        <taxon>Dikarya</taxon>
        <taxon>Ascomycota</taxon>
        <taxon>Saccharomycotina</taxon>
        <taxon>Pichiomycetes</taxon>
        <taxon>Debaryomycetaceae</taxon>
        <taxon>Candida/Lodderomyces clade</taxon>
        <taxon>Lodderomyces</taxon>
    </lineage>
</organism>
<name>EIF3C_LODEL</name>
<reference key="1">
    <citation type="journal article" date="2009" name="Nature">
        <title>Evolution of pathogenicity and sexual reproduction in eight Candida genomes.</title>
        <authorList>
            <person name="Butler G."/>
            <person name="Rasmussen M.D."/>
            <person name="Lin M.F."/>
            <person name="Santos M.A.S."/>
            <person name="Sakthikumar S."/>
            <person name="Munro C.A."/>
            <person name="Rheinbay E."/>
            <person name="Grabherr M."/>
            <person name="Forche A."/>
            <person name="Reedy J.L."/>
            <person name="Agrafioti I."/>
            <person name="Arnaud M.B."/>
            <person name="Bates S."/>
            <person name="Brown A.J.P."/>
            <person name="Brunke S."/>
            <person name="Costanzo M.C."/>
            <person name="Fitzpatrick D.A."/>
            <person name="de Groot P.W.J."/>
            <person name="Harris D."/>
            <person name="Hoyer L.L."/>
            <person name="Hube B."/>
            <person name="Klis F.M."/>
            <person name="Kodira C."/>
            <person name="Lennard N."/>
            <person name="Logue M.E."/>
            <person name="Martin R."/>
            <person name="Neiman A.M."/>
            <person name="Nikolaou E."/>
            <person name="Quail M.A."/>
            <person name="Quinn J."/>
            <person name="Santos M.C."/>
            <person name="Schmitzberger F.F."/>
            <person name="Sherlock G."/>
            <person name="Shah P."/>
            <person name="Silverstein K.A.T."/>
            <person name="Skrzypek M.S."/>
            <person name="Soll D."/>
            <person name="Staggs R."/>
            <person name="Stansfield I."/>
            <person name="Stumpf M.P.H."/>
            <person name="Sudbery P.E."/>
            <person name="Srikantha T."/>
            <person name="Zeng Q."/>
            <person name="Berman J."/>
            <person name="Berriman M."/>
            <person name="Heitman J."/>
            <person name="Gow N.A.R."/>
            <person name="Lorenz M.C."/>
            <person name="Birren B.W."/>
            <person name="Kellis M."/>
            <person name="Cuomo C.A."/>
        </authorList>
    </citation>
    <scope>NUCLEOTIDE SEQUENCE [LARGE SCALE GENOMIC DNA]</scope>
    <source>
        <strain>ATCC 11503 / BCRC 21390 / CBS 2605 / JCM 1781 / NBRC 1676 / NRRL YB-4239</strain>
    </source>
</reference>
<sequence length="790" mass="90330">MSRFFVSGYNSESSSEEEDLLSSEEELLTSSGEENEDSDFFNDDDESSSDEEDGRPSGPAYFLKKSFLKGAGGDSDSDSDDEGRKVVKSAKEKLLDDMKASIEVINVNKRTNNWIVVLSEFEKLGKLINRANQQNFGTPKFYVKLLASLDDSITETVNNEKDDKTMKADEARAFNTLRQRVKKQIKEFQVYFDLYKDVPENFDQEDESLDSFAKNQETREETRTLSPIFHNLKLINESRGKKNIDKSEQVTTLEGLISDEASDFELISLYQSLLSVRFDASSNQSFMAIQDWRSNKRDLNNLLDILVKSKVYQLSEEGQTTDDIDIEPTANEDGVKVIYGSVTSLIDRLDDEFTKSLQNTDPHSMEYVERLKDETEIYNLIVRGQAYIESIVADKQQSNQLARVVLRRLEHIYYKPNQLIKANEEEAWKNIKPSTQTPSEVIESLTQFLQSNKVFAKQALLYSIYYYAVNGDYNKAKELFLSAHFNLSDSALQVSYNRALVQLGLSAFRSGAIEESHKILNEMVNSQRSKELLGQGFNSKFPNQATVVEKQRLLPFHQHINLELLECVYMTCSLLIEIPALASNKDPKRRNASLKSFKSKLEFHDRQYFTGPPESIKDHIVHASIALQKGDWSKAYNLLSSIKIWHLFPDHDNLLAMMKNQLQIEGLRTYIFTYKAVYSKLSISKLSSIFGLLQENVSEVLTQMIEKLDINGEVSGDYIVFTTDSQRSKLQELAIVMNDKIQLLTEKNEKTSSNGYAKKNQSQTQPQAQSKEVEENKFRYANVNTNTDEF</sequence>
<evidence type="ECO:0000255" key="1">
    <source>
        <dbReference type="HAMAP-Rule" id="MF_03002"/>
    </source>
</evidence>
<evidence type="ECO:0000255" key="2">
    <source>
        <dbReference type="PROSITE-ProRule" id="PRU01185"/>
    </source>
</evidence>
<evidence type="ECO:0000256" key="3">
    <source>
        <dbReference type="SAM" id="MobiDB-lite"/>
    </source>
</evidence>
<protein>
    <recommendedName>
        <fullName evidence="1">Eukaryotic translation initiation factor 3 subunit C</fullName>
        <shortName evidence="1">eIF3c</shortName>
    </recommendedName>
    <alternativeName>
        <fullName evidence="1">Eukaryotic translation initiation factor 3 93 kDa subunit homolog</fullName>
        <shortName evidence="1">eIF3 p93</shortName>
    </alternativeName>
    <alternativeName>
        <fullName evidence="1">Translation initiation factor eIF3, p93 subunit homolog</fullName>
    </alternativeName>
</protein>
<comment type="function">
    <text evidence="1">Component of the eukaryotic translation initiation factor 3 (eIF-3) complex, which is involved in protein synthesis of a specialized repertoire of mRNAs and, together with other initiation factors, stimulates binding of mRNA and methionyl-tRNAi to the 40S ribosome. The eIF-3 complex specifically targets and initiates translation of a subset of mRNAs involved in cell proliferation.</text>
</comment>
<comment type="subunit">
    <text evidence="1">Component of the eukaryotic translation initiation factor 3 (eIF-3) complex.</text>
</comment>
<comment type="subcellular location">
    <subcellularLocation>
        <location evidence="1">Cytoplasm</location>
    </subcellularLocation>
</comment>
<comment type="similarity">
    <text evidence="1">Belongs to the eIF-3 subunit C family.</text>
</comment>
<keyword id="KW-0963">Cytoplasm</keyword>
<keyword id="KW-0396">Initiation factor</keyword>
<keyword id="KW-0648">Protein biosynthesis</keyword>
<keyword id="KW-1185">Reference proteome</keyword>
<accession>A5E3Q2</accession>
<feature type="chain" id="PRO_0000366882" description="Eukaryotic translation initiation factor 3 subunit C">
    <location>
        <begin position="1"/>
        <end position="790"/>
    </location>
</feature>
<feature type="domain" description="PCI" evidence="2">
    <location>
        <begin position="556"/>
        <end position="728"/>
    </location>
</feature>
<feature type="region of interest" description="Disordered" evidence="3">
    <location>
        <begin position="1"/>
        <end position="62"/>
    </location>
</feature>
<feature type="region of interest" description="Disordered" evidence="3">
    <location>
        <begin position="748"/>
        <end position="790"/>
    </location>
</feature>
<feature type="compositionally biased region" description="Acidic residues" evidence="3">
    <location>
        <begin position="14"/>
        <end position="53"/>
    </location>
</feature>
<feature type="compositionally biased region" description="Polar residues" evidence="3">
    <location>
        <begin position="751"/>
        <end position="770"/>
    </location>
</feature>
<dbReference type="EMBL" id="CH981529">
    <property type="protein sequence ID" value="EDK46060.1"/>
    <property type="molecule type" value="Genomic_DNA"/>
</dbReference>
<dbReference type="RefSeq" id="XP_001524269.1">
    <property type="nucleotide sequence ID" value="XM_001524219.1"/>
</dbReference>
<dbReference type="SMR" id="A5E3Q2"/>
<dbReference type="FunCoup" id="A5E3Q2">
    <property type="interactions" value="1157"/>
</dbReference>
<dbReference type="STRING" id="379508.A5E3Q2"/>
<dbReference type="GeneID" id="5231599"/>
<dbReference type="KEGG" id="lel:PVL30_003967"/>
<dbReference type="VEuPathDB" id="FungiDB:LELG_04240"/>
<dbReference type="eggNOG" id="KOG1076">
    <property type="taxonomic scope" value="Eukaryota"/>
</dbReference>
<dbReference type="HOGENOM" id="CLU_004304_0_2_1"/>
<dbReference type="InParanoid" id="A5E3Q2"/>
<dbReference type="OMA" id="FRCGLIK"/>
<dbReference type="OrthoDB" id="29647at2759"/>
<dbReference type="Proteomes" id="UP000001996">
    <property type="component" value="Unassembled WGS sequence"/>
</dbReference>
<dbReference type="GO" id="GO:0010494">
    <property type="term" value="C:cytoplasmic stress granule"/>
    <property type="evidence" value="ECO:0007669"/>
    <property type="project" value="EnsemblFungi"/>
</dbReference>
<dbReference type="GO" id="GO:0016282">
    <property type="term" value="C:eukaryotic 43S preinitiation complex"/>
    <property type="evidence" value="ECO:0007669"/>
    <property type="project" value="UniProtKB-UniRule"/>
</dbReference>
<dbReference type="GO" id="GO:0033290">
    <property type="term" value="C:eukaryotic 48S preinitiation complex"/>
    <property type="evidence" value="ECO:0007669"/>
    <property type="project" value="UniProtKB-UniRule"/>
</dbReference>
<dbReference type="GO" id="GO:0071540">
    <property type="term" value="C:eukaryotic translation initiation factor 3 complex, eIF3e"/>
    <property type="evidence" value="ECO:0007669"/>
    <property type="project" value="EnsemblFungi"/>
</dbReference>
<dbReference type="GO" id="GO:0071541">
    <property type="term" value="C:eukaryotic translation initiation factor 3 complex, eIF3m"/>
    <property type="evidence" value="ECO:0007669"/>
    <property type="project" value="EnsemblFungi"/>
</dbReference>
<dbReference type="GO" id="GO:0043614">
    <property type="term" value="C:multi-eIF complex"/>
    <property type="evidence" value="ECO:0007669"/>
    <property type="project" value="EnsemblFungi"/>
</dbReference>
<dbReference type="GO" id="GO:0003723">
    <property type="term" value="F:RNA binding"/>
    <property type="evidence" value="ECO:0007669"/>
    <property type="project" value="InterPro"/>
</dbReference>
<dbReference type="GO" id="GO:0003743">
    <property type="term" value="F:translation initiation factor activity"/>
    <property type="evidence" value="ECO:0007669"/>
    <property type="project" value="UniProtKB-UniRule"/>
</dbReference>
<dbReference type="GO" id="GO:0031369">
    <property type="term" value="F:translation initiation factor binding"/>
    <property type="evidence" value="ECO:0007669"/>
    <property type="project" value="EnsemblFungi"/>
</dbReference>
<dbReference type="GO" id="GO:0001732">
    <property type="term" value="P:formation of cytoplasmic translation initiation complex"/>
    <property type="evidence" value="ECO:0007669"/>
    <property type="project" value="UniProtKB-UniRule"/>
</dbReference>
<dbReference type="HAMAP" id="MF_03002">
    <property type="entry name" value="eIF3c"/>
    <property type="match status" value="1"/>
</dbReference>
<dbReference type="InterPro" id="IPR027516">
    <property type="entry name" value="EIF3C"/>
</dbReference>
<dbReference type="InterPro" id="IPR008905">
    <property type="entry name" value="EIF3C_N_dom"/>
</dbReference>
<dbReference type="InterPro" id="IPR000717">
    <property type="entry name" value="PCI_dom"/>
</dbReference>
<dbReference type="PANTHER" id="PTHR13937">
    <property type="entry name" value="EUKARYOTIC TRANSLATION INITATION FACTOR 3, SUBUNIT 8 EIF3S8 -RELATED"/>
    <property type="match status" value="1"/>
</dbReference>
<dbReference type="PANTHER" id="PTHR13937:SF0">
    <property type="entry name" value="EUKARYOTIC TRANSLATION INITIATION FACTOR 3 SUBUNIT C-RELATED"/>
    <property type="match status" value="1"/>
</dbReference>
<dbReference type="Pfam" id="PF05470">
    <property type="entry name" value="eIF-3c_N"/>
    <property type="match status" value="2"/>
</dbReference>
<dbReference type="SMART" id="SM00088">
    <property type="entry name" value="PINT"/>
    <property type="match status" value="1"/>
</dbReference>
<dbReference type="PROSITE" id="PS50250">
    <property type="entry name" value="PCI"/>
    <property type="match status" value="1"/>
</dbReference>